<proteinExistence type="inferred from homology"/>
<reference key="1">
    <citation type="journal article" date="2006" name="J. Bacteriol.">
        <title>Comparative genomic evidence for a close relationship between the dimorphic prosthecate bacteria Hyphomonas neptunium and Caulobacter crescentus.</title>
        <authorList>
            <person name="Badger J.H."/>
            <person name="Hoover T.R."/>
            <person name="Brun Y.V."/>
            <person name="Weiner R.M."/>
            <person name="Laub M.T."/>
            <person name="Alexandre G."/>
            <person name="Mrazek J."/>
            <person name="Ren Q."/>
            <person name="Paulsen I.T."/>
            <person name="Nelson K.E."/>
            <person name="Khouri H.M."/>
            <person name="Radune D."/>
            <person name="Sosa J."/>
            <person name="Dodson R.J."/>
            <person name="Sullivan S.A."/>
            <person name="Rosovitz M.J."/>
            <person name="Madupu R."/>
            <person name="Brinkac L.M."/>
            <person name="Durkin A.S."/>
            <person name="Daugherty S.C."/>
            <person name="Kothari S.P."/>
            <person name="Giglio M.G."/>
            <person name="Zhou L."/>
            <person name="Haft D.H."/>
            <person name="Selengut J.D."/>
            <person name="Davidsen T.M."/>
            <person name="Yang Q."/>
            <person name="Zafar N."/>
            <person name="Ward N.L."/>
        </authorList>
    </citation>
    <scope>NUCLEOTIDE SEQUENCE [LARGE SCALE GENOMIC DNA]</scope>
    <source>
        <strain>ATCC 15444</strain>
    </source>
</reference>
<dbReference type="EMBL" id="CP000158">
    <property type="protein sequence ID" value="ABI76145.1"/>
    <property type="molecule type" value="Genomic_DNA"/>
</dbReference>
<dbReference type="RefSeq" id="WP_011646775.1">
    <property type="nucleotide sequence ID" value="NC_008358.1"/>
</dbReference>
<dbReference type="SMR" id="Q0C1B8"/>
<dbReference type="STRING" id="228405.HNE_1771"/>
<dbReference type="KEGG" id="hne:HNE_1771"/>
<dbReference type="eggNOG" id="COG0233">
    <property type="taxonomic scope" value="Bacteria"/>
</dbReference>
<dbReference type="HOGENOM" id="CLU_073981_2_1_5"/>
<dbReference type="Proteomes" id="UP000001959">
    <property type="component" value="Chromosome"/>
</dbReference>
<dbReference type="GO" id="GO:0005829">
    <property type="term" value="C:cytosol"/>
    <property type="evidence" value="ECO:0007669"/>
    <property type="project" value="GOC"/>
</dbReference>
<dbReference type="GO" id="GO:0043023">
    <property type="term" value="F:ribosomal large subunit binding"/>
    <property type="evidence" value="ECO:0007669"/>
    <property type="project" value="TreeGrafter"/>
</dbReference>
<dbReference type="GO" id="GO:0002184">
    <property type="term" value="P:cytoplasmic translational termination"/>
    <property type="evidence" value="ECO:0007669"/>
    <property type="project" value="TreeGrafter"/>
</dbReference>
<dbReference type="CDD" id="cd00520">
    <property type="entry name" value="RRF"/>
    <property type="match status" value="1"/>
</dbReference>
<dbReference type="FunFam" id="1.10.132.20:FF:000001">
    <property type="entry name" value="Ribosome-recycling factor"/>
    <property type="match status" value="1"/>
</dbReference>
<dbReference type="FunFam" id="3.30.1360.40:FF:000001">
    <property type="entry name" value="Ribosome-recycling factor"/>
    <property type="match status" value="1"/>
</dbReference>
<dbReference type="Gene3D" id="3.30.1360.40">
    <property type="match status" value="1"/>
</dbReference>
<dbReference type="Gene3D" id="1.10.132.20">
    <property type="entry name" value="Ribosome-recycling factor"/>
    <property type="match status" value="1"/>
</dbReference>
<dbReference type="HAMAP" id="MF_00040">
    <property type="entry name" value="RRF"/>
    <property type="match status" value="1"/>
</dbReference>
<dbReference type="InterPro" id="IPR002661">
    <property type="entry name" value="Ribosome_recyc_fac"/>
</dbReference>
<dbReference type="InterPro" id="IPR023584">
    <property type="entry name" value="Ribosome_recyc_fac_dom"/>
</dbReference>
<dbReference type="InterPro" id="IPR036191">
    <property type="entry name" value="RRF_sf"/>
</dbReference>
<dbReference type="NCBIfam" id="TIGR00496">
    <property type="entry name" value="frr"/>
    <property type="match status" value="1"/>
</dbReference>
<dbReference type="PANTHER" id="PTHR20982:SF3">
    <property type="entry name" value="MITOCHONDRIAL RIBOSOME RECYCLING FACTOR PSEUDO 1"/>
    <property type="match status" value="1"/>
</dbReference>
<dbReference type="PANTHER" id="PTHR20982">
    <property type="entry name" value="RIBOSOME RECYCLING FACTOR"/>
    <property type="match status" value="1"/>
</dbReference>
<dbReference type="Pfam" id="PF01765">
    <property type="entry name" value="RRF"/>
    <property type="match status" value="1"/>
</dbReference>
<dbReference type="SUPFAM" id="SSF55194">
    <property type="entry name" value="Ribosome recycling factor, RRF"/>
    <property type="match status" value="1"/>
</dbReference>
<protein>
    <recommendedName>
        <fullName evidence="1">Ribosome-recycling factor</fullName>
        <shortName evidence="1">RRF</shortName>
    </recommendedName>
    <alternativeName>
        <fullName evidence="1">Ribosome-releasing factor</fullName>
    </alternativeName>
</protein>
<evidence type="ECO:0000255" key="1">
    <source>
        <dbReference type="HAMAP-Rule" id="MF_00040"/>
    </source>
</evidence>
<gene>
    <name evidence="1" type="primary">frr</name>
    <name type="ordered locus">HNE_1771</name>
</gene>
<sequence>MSYSKQDIERRMEGALASLASEFAGLRTGRASVNLLDSIQVPAYGGVTPLSQVASVTVSDTRMLSVNVWDKTVVGAADRAIRDSGLGLNPVMDGQTLRIPIPPLNEERRVELTKIAGKYAEAARVAVRNVRRDGMDDLKKAEKDGEISEDRHRALTEEVQKLTDAFVKRVDEALKAKEAEIMQV</sequence>
<feature type="chain" id="PRO_0000341013" description="Ribosome-recycling factor">
    <location>
        <begin position="1"/>
        <end position="184"/>
    </location>
</feature>
<organism>
    <name type="scientific">Hyphomonas neptunium (strain ATCC 15444)</name>
    <dbReference type="NCBI Taxonomy" id="228405"/>
    <lineage>
        <taxon>Bacteria</taxon>
        <taxon>Pseudomonadati</taxon>
        <taxon>Pseudomonadota</taxon>
        <taxon>Alphaproteobacteria</taxon>
        <taxon>Hyphomonadales</taxon>
        <taxon>Hyphomonadaceae</taxon>
        <taxon>Hyphomonas</taxon>
    </lineage>
</organism>
<accession>Q0C1B8</accession>
<comment type="function">
    <text evidence="1">Responsible for the release of ribosomes from messenger RNA at the termination of protein biosynthesis. May increase the efficiency of translation by recycling ribosomes from one round of translation to another.</text>
</comment>
<comment type="subcellular location">
    <subcellularLocation>
        <location evidence="1">Cytoplasm</location>
    </subcellularLocation>
</comment>
<comment type="similarity">
    <text evidence="1">Belongs to the RRF family.</text>
</comment>
<name>RRF_HYPNA</name>
<keyword id="KW-0963">Cytoplasm</keyword>
<keyword id="KW-0648">Protein biosynthesis</keyword>
<keyword id="KW-1185">Reference proteome</keyword>